<accession>Q4V887</accession>
<sequence length="741" mass="83231">MATNLSVIMILTFALWVTNPLHELQSTAAFSQTTEKINSNWESGINVDVAVTMQRHHLQQLFYRYGENDSLSVEGFRKLLQNIGIDKIKRVHIHHDHERHSDHERHSDHERHSHRGHAAAGKNSRKAFCPDLDSDNSGKNPNTSQGKGSRPAEHVNGRRNGKESASSSEVTSAVYNTVSEGTHFLETIETPKPGRRTKDINPSTPPSITEKSRVGRLSRLARRKGNDSVSEPRKSFMYSRTSNDNIQECFNATKLLTSHGMSVQALLNATEFNYLCPAIINQIDARSCLIHTASEKKAEIPPKTYSLQIAWLGGFIAISIISFLSLLGVILVPLMNRVFFKFLLSFLVALAVGTLSGDALLHLLPHSHASHHHSHSHEEPAMEMKRGPLFSHLSAQNLEESSYFDSTWKGLTALGGLYFMFLVEHVLTLIKQFKDKKKKNQKKPENDEDVESKKQLSKYESQLSTNEEKVDTGERPESYLQADSQEPSPFDSQQPTLLEEEEVMIAHAHPQEVYNEYVPRGCKNKCHSHFHDTLGQSDDLIHHHHDYHHILHHHHHQNHHPHSHSQRYSREELKDAGIATLAWMVIMGDGLHNFSDGLAIGAAFTEGLSSGLSTSVAVFCHELPHELGDFAVLLKAGMTVKQAVLYNALSAMLAYLGMATGIFIGHYAENVSMWIFALTAGLFMYVALVDMVPEMLHNDASDHGCSRWGYFFLQNAGILLGFGIMLLISIFEHKIVFRINF</sequence>
<comment type="function">
    <text evidence="1 2">Zinc-influx transporter which plays a role in zinc homeostasis and in the induction of epithelial-to-mesenchymal transition (EMT). When associated with SLC39A10, the heterodimer formed by SLC39A10 and SLC39A6 mediates cellular zinc uptake to trigger cells to undergo epithelial- to-mesenchymal transition (EMT) (By similarity). The SLC39A10-SLC39A6 heterodimer also controls NCAM1 phosphorylation and its integration into focal adhesion complexes during EMT (By similarity). Zinc influx inactivates GSK3B, enabling unphosphorylated SNAI1 in the nucleus to down-regulate adherence genes such as CDH1, causing loss of cell adherence. In addition, the SLC39A10-SLC39A6 heterodimer plays an essentiel role in initiating mitosis by importing zinc into cells to initiate a pathway resulting in the onset of mitosis. Participates in the T-cell receptor signaling regulation by mediating cellular zinc uptake into activated lymphocytes. Regulates the zinc influx necessary for proper meiotic progression to metaphase II (MII) that allows the oocyte-to-egg transition (By similarity).</text>
</comment>
<comment type="catalytic activity">
    <reaction evidence="1">
        <text>Zn(2+)(in) = Zn(2+)(out)</text>
        <dbReference type="Rhea" id="RHEA:29351"/>
        <dbReference type="ChEBI" id="CHEBI:29105"/>
    </reaction>
</comment>
<comment type="subunit">
    <text evidence="1 2">Interacts with SLC39A10; which triggers cells to undergo EMT and mitosis. Found in a complex with SLC39A6, SLC39A10 and with the 'Ser-727' phosphorylated form of STAT3 throughout mitosis (By similarity). Found in a complex with SLC39A6, SLC39A10 and with NCAM1; this complex controls NCAM1 phosphorylation and integration into focal adhesion complexes during epithelial-to-mesenchymal transition (EMT). Found in a complex with SLC39A6, SLC39A10 and with GSK3B that controls NCAM1 phosphorylation (By similarity).</text>
</comment>
<comment type="subcellular location">
    <subcellularLocation>
        <location evidence="5">Cell membrane</location>
        <topology evidence="1">Multi-pass membrane protein</topology>
    </subcellularLocation>
    <subcellularLocation>
        <location evidence="1">Cell projection</location>
        <location evidence="1">Lamellipodium membrane</location>
        <topology evidence="1">Multi-pass membrane protein</topology>
    </subcellularLocation>
    <subcellularLocation>
        <location evidence="1">Membrane raft</location>
        <topology evidence="3">Multi-pass membrane protein</topology>
    </subcellularLocation>
    <subcellularLocation>
        <location evidence="5">Apical cell membrane</location>
    </subcellularLocation>
    <text evidence="1 5">Localizes to lipid rafts in T cells and is recruited into the immunological synapse in response to TCR stimulation (By similarity). In the choroid plexus is limited to the apical membrane in epithelial cells (PubMed:15867272).</text>
</comment>
<comment type="tissue specificity">
    <text evidence="5">Expressed in the endothelial cells of the brain capillaries.</text>
</comment>
<comment type="PTM">
    <text evidence="1">Cleaved on the N-terminus before locating to the plasma membrane.</text>
</comment>
<comment type="PTM">
    <text evidence="1">N-glycosylated.</text>
</comment>
<comment type="PTM">
    <text evidence="1">Phosphorylated by ZAP70 in response to TCR stimulation leading to its activation.</text>
</comment>
<comment type="similarity">
    <text evidence="3">Belongs to the ZIP transporter (TC 2.A.5) family.</text>
</comment>
<organism>
    <name type="scientific">Rattus norvegicus</name>
    <name type="common">Rat</name>
    <dbReference type="NCBI Taxonomy" id="10116"/>
    <lineage>
        <taxon>Eukaryota</taxon>
        <taxon>Metazoa</taxon>
        <taxon>Chordata</taxon>
        <taxon>Craniata</taxon>
        <taxon>Vertebrata</taxon>
        <taxon>Euteleostomi</taxon>
        <taxon>Mammalia</taxon>
        <taxon>Eutheria</taxon>
        <taxon>Euarchontoglires</taxon>
        <taxon>Glires</taxon>
        <taxon>Rodentia</taxon>
        <taxon>Myomorpha</taxon>
        <taxon>Muroidea</taxon>
        <taxon>Muridae</taxon>
        <taxon>Murinae</taxon>
        <taxon>Rattus</taxon>
    </lineage>
</organism>
<dbReference type="EMBL" id="BC097493">
    <property type="protein sequence ID" value="AAH97493.1"/>
    <property type="molecule type" value="mRNA"/>
</dbReference>
<dbReference type="RefSeq" id="NP_001019916.1">
    <property type="nucleotide sequence ID" value="NM_001024745.1"/>
</dbReference>
<dbReference type="FunCoup" id="Q4V887">
    <property type="interactions" value="4070"/>
</dbReference>
<dbReference type="STRING" id="10116.ENSRNOP00000075595"/>
<dbReference type="GlyCosmos" id="Q4V887">
    <property type="glycosylation" value="6 sites, No reported glycans"/>
</dbReference>
<dbReference type="GlyGen" id="Q4V887">
    <property type="glycosylation" value="6 sites"/>
</dbReference>
<dbReference type="iPTMnet" id="Q4V887"/>
<dbReference type="PhosphoSitePlus" id="Q4V887"/>
<dbReference type="jPOST" id="Q4V887"/>
<dbReference type="PaxDb" id="10116-ENSRNOP00000034256"/>
<dbReference type="Ensembl" id="ENSRNOT00000036306.5">
    <property type="protein sequence ID" value="ENSRNOP00000034256.4"/>
    <property type="gene ID" value="ENSRNOG00000028703.6"/>
</dbReference>
<dbReference type="GeneID" id="291733"/>
<dbReference type="KEGG" id="rno:291733"/>
<dbReference type="UCSC" id="RGD:1304664">
    <property type="organism name" value="rat"/>
</dbReference>
<dbReference type="AGR" id="RGD:1304664"/>
<dbReference type="CTD" id="25800"/>
<dbReference type="RGD" id="1304664">
    <property type="gene designation" value="Slc39a6"/>
</dbReference>
<dbReference type="eggNOG" id="KOG2693">
    <property type="taxonomic scope" value="Eukaryota"/>
</dbReference>
<dbReference type="GeneTree" id="ENSGT00940000156387"/>
<dbReference type="InParanoid" id="Q4V887"/>
<dbReference type="OMA" id="LLMSHGM"/>
<dbReference type="OrthoDB" id="200954at2759"/>
<dbReference type="PhylomeDB" id="Q4V887"/>
<dbReference type="TreeFam" id="TF318470"/>
<dbReference type="Reactome" id="R-RNO-442380">
    <property type="pathway name" value="Zinc influx into cells by the SLC39 gene family"/>
</dbReference>
<dbReference type="PRO" id="PR:Q4V887"/>
<dbReference type="Proteomes" id="UP000002494">
    <property type="component" value="Chromosome 18"/>
</dbReference>
<dbReference type="Bgee" id="ENSRNOG00000028703">
    <property type="expression patterns" value="Expressed in ovary and 19 other cell types or tissues"/>
</dbReference>
<dbReference type="GO" id="GO:0016324">
    <property type="term" value="C:apical plasma membrane"/>
    <property type="evidence" value="ECO:0000314"/>
    <property type="project" value="UniProtKB"/>
</dbReference>
<dbReference type="GO" id="GO:0005783">
    <property type="term" value="C:endoplasmic reticulum"/>
    <property type="evidence" value="ECO:0000266"/>
    <property type="project" value="RGD"/>
</dbReference>
<dbReference type="GO" id="GO:0031258">
    <property type="term" value="C:lamellipodium membrane"/>
    <property type="evidence" value="ECO:0000250"/>
    <property type="project" value="UniProtKB"/>
</dbReference>
<dbReference type="GO" id="GO:0045121">
    <property type="term" value="C:membrane raft"/>
    <property type="evidence" value="ECO:0000250"/>
    <property type="project" value="UniProtKB"/>
</dbReference>
<dbReference type="GO" id="GO:0005886">
    <property type="term" value="C:plasma membrane"/>
    <property type="evidence" value="ECO:0000250"/>
    <property type="project" value="UniProtKB"/>
</dbReference>
<dbReference type="GO" id="GO:0140410">
    <property type="term" value="F:monoatomic cation:bicarbonate symporter activity"/>
    <property type="evidence" value="ECO:0000318"/>
    <property type="project" value="GO_Central"/>
</dbReference>
<dbReference type="GO" id="GO:0005385">
    <property type="term" value="F:zinc ion transmembrane transporter activity"/>
    <property type="evidence" value="ECO:0000250"/>
    <property type="project" value="UniProtKB"/>
</dbReference>
<dbReference type="GO" id="GO:0001837">
    <property type="term" value="P:epithelial to mesenchymal transition"/>
    <property type="evidence" value="ECO:0000250"/>
    <property type="project" value="UniProtKB"/>
</dbReference>
<dbReference type="GO" id="GO:0030003">
    <property type="term" value="P:intracellular monoatomic cation homeostasis"/>
    <property type="evidence" value="ECO:0000318"/>
    <property type="project" value="GO_Central"/>
</dbReference>
<dbReference type="GO" id="GO:0006882">
    <property type="term" value="P:intracellular zinc ion homeostasis"/>
    <property type="evidence" value="ECO:0000266"/>
    <property type="project" value="RGD"/>
</dbReference>
<dbReference type="GO" id="GO:0046649">
    <property type="term" value="P:lymphocyte activation"/>
    <property type="evidence" value="ECO:0000250"/>
    <property type="project" value="UniProtKB"/>
</dbReference>
<dbReference type="GO" id="GO:0050852">
    <property type="term" value="P:T cell receptor signaling pathway"/>
    <property type="evidence" value="ECO:0000250"/>
    <property type="project" value="UniProtKB"/>
</dbReference>
<dbReference type="GO" id="GO:0071578">
    <property type="term" value="P:zinc ion import across plasma membrane"/>
    <property type="evidence" value="ECO:0000250"/>
    <property type="project" value="UniProtKB"/>
</dbReference>
<dbReference type="GO" id="GO:0071577">
    <property type="term" value="P:zinc ion transmembrane transport"/>
    <property type="evidence" value="ECO:0000250"/>
    <property type="project" value="UniProtKB"/>
</dbReference>
<dbReference type="InterPro" id="IPR003689">
    <property type="entry name" value="ZIP"/>
</dbReference>
<dbReference type="InterPro" id="IPR050799">
    <property type="entry name" value="ZIP_Transporter"/>
</dbReference>
<dbReference type="PANTHER" id="PTHR12191">
    <property type="entry name" value="SOLUTE CARRIER FAMILY 39"/>
    <property type="match status" value="1"/>
</dbReference>
<dbReference type="PANTHER" id="PTHR12191:SF22">
    <property type="entry name" value="ZINC TRANSPORTER ZIP6"/>
    <property type="match status" value="1"/>
</dbReference>
<dbReference type="Pfam" id="PF02535">
    <property type="entry name" value="Zip"/>
    <property type="match status" value="1"/>
</dbReference>
<proteinExistence type="evidence at protein level"/>
<name>S39A6_RAT</name>
<keyword id="KW-1003">Cell membrane</keyword>
<keyword id="KW-0966">Cell projection</keyword>
<keyword id="KW-0175">Coiled coil</keyword>
<keyword id="KW-0325">Glycoprotein</keyword>
<keyword id="KW-0406">Ion transport</keyword>
<keyword id="KW-0472">Membrane</keyword>
<keyword id="KW-0597">Phosphoprotein</keyword>
<keyword id="KW-1185">Reference proteome</keyword>
<keyword id="KW-0732">Signal</keyword>
<keyword id="KW-0812">Transmembrane</keyword>
<keyword id="KW-1133">Transmembrane helix</keyword>
<keyword id="KW-0813">Transport</keyword>
<keyword id="KW-0862">Zinc</keyword>
<keyword id="KW-0864">Zinc transport</keyword>
<feature type="signal peptide" evidence="3">
    <location>
        <begin position="1"/>
        <end position="20"/>
    </location>
</feature>
<feature type="chain" id="PRO_0000278127" description="Zinc transporter ZIP6">
    <location>
        <begin position="21"/>
        <end position="741"/>
    </location>
</feature>
<feature type="topological domain" description="Extracellular" evidence="1">
    <location>
        <begin position="21"/>
        <end position="311"/>
    </location>
</feature>
<feature type="transmembrane region" description="Helical; Name=1" evidence="3">
    <location>
        <begin position="312"/>
        <end position="332"/>
    </location>
</feature>
<feature type="topological domain" description="Cytoplasmic" evidence="3">
    <location>
        <begin position="333"/>
        <end position="341"/>
    </location>
</feature>
<feature type="transmembrane region" description="Helical; Name=2" evidence="3">
    <location>
        <begin position="342"/>
        <end position="362"/>
    </location>
</feature>
<feature type="topological domain" description="Extracellular" evidence="3">
    <location>
        <begin position="363"/>
        <end position="409"/>
    </location>
</feature>
<feature type="transmembrane region" description="Helical; Name=3" evidence="3">
    <location>
        <begin position="410"/>
        <end position="430"/>
    </location>
</feature>
<feature type="topological domain" description="Cytoplasmic" evidence="3">
    <location>
        <begin position="431"/>
        <end position="643"/>
    </location>
</feature>
<feature type="transmembrane region" description="Helical; Name=4" evidence="3">
    <location>
        <begin position="644"/>
        <end position="664"/>
    </location>
</feature>
<feature type="topological domain" description="Extracellular" evidence="3">
    <location>
        <begin position="665"/>
        <end position="672"/>
    </location>
</feature>
<feature type="transmembrane region" description="Helical; Name=5" evidence="3">
    <location>
        <begin position="673"/>
        <end position="693"/>
    </location>
</feature>
<feature type="topological domain" description="Cytoplasmic" evidence="3">
    <location>
        <begin position="694"/>
        <end position="710"/>
    </location>
</feature>
<feature type="transmembrane region" description="Helical; Name=6" evidence="3">
    <location>
        <begin position="711"/>
        <end position="731"/>
    </location>
</feature>
<feature type="topological domain" description="Extracellular" evidence="1">
    <location>
        <begin position="732"/>
        <end position="741"/>
    </location>
</feature>
<feature type="region of interest" description="Disordered" evidence="4">
    <location>
        <begin position="95"/>
        <end position="172"/>
    </location>
</feature>
<feature type="region of interest" description="Disordered" evidence="4">
    <location>
        <begin position="189"/>
        <end position="213"/>
    </location>
</feature>
<feature type="region of interest" description="Disordered" evidence="4">
    <location>
        <begin position="434"/>
        <end position="494"/>
    </location>
</feature>
<feature type="coiled-coil region" evidence="3">
    <location>
        <begin position="450"/>
        <end position="475"/>
    </location>
</feature>
<feature type="compositionally biased region" description="Basic and acidic residues" evidence="4">
    <location>
        <begin position="95"/>
        <end position="111"/>
    </location>
</feature>
<feature type="compositionally biased region" description="Polar residues" evidence="4">
    <location>
        <begin position="135"/>
        <end position="147"/>
    </location>
</feature>
<feature type="compositionally biased region" description="Basic and acidic residues" evidence="4">
    <location>
        <begin position="150"/>
        <end position="162"/>
    </location>
</feature>
<feature type="compositionally biased region" description="Low complexity" evidence="4">
    <location>
        <begin position="163"/>
        <end position="172"/>
    </location>
</feature>
<feature type="compositionally biased region" description="Polar residues" evidence="4">
    <location>
        <begin position="200"/>
        <end position="209"/>
    </location>
</feature>
<feature type="compositionally biased region" description="Basic and acidic residues" evidence="4">
    <location>
        <begin position="466"/>
        <end position="477"/>
    </location>
</feature>
<feature type="compositionally biased region" description="Polar residues" evidence="4">
    <location>
        <begin position="481"/>
        <end position="494"/>
    </location>
</feature>
<feature type="modified residue" description="Phosphoserine" evidence="1">
    <location>
        <position position="457"/>
    </location>
</feature>
<feature type="modified residue" description="Phosphoserine" evidence="9">
    <location>
        <position position="464"/>
    </location>
</feature>
<feature type="glycosylation site" description="N-linked (GlcNAc...) asparagine" evidence="3">
    <location>
        <position position="68"/>
    </location>
</feature>
<feature type="glycosylation site" description="N-linked (GlcNAc...) asparagine" evidence="3">
    <location>
        <position position="142"/>
    </location>
</feature>
<feature type="glycosylation site" description="N-linked (GlcNAc...) asparagine" evidence="3">
    <location>
        <position position="226"/>
    </location>
</feature>
<feature type="glycosylation site" description="N-linked (GlcNAc...) asparagine" evidence="3">
    <location>
        <position position="251"/>
    </location>
</feature>
<feature type="glycosylation site" description="N-linked (GlcNAc...) asparagine" evidence="3">
    <location>
        <position position="268"/>
    </location>
</feature>
<feature type="glycosylation site" description="N-linked (GlcNAc...) asparagine" evidence="3">
    <location>
        <position position="670"/>
    </location>
</feature>
<evidence type="ECO:0000250" key="1">
    <source>
        <dbReference type="UniProtKB" id="Q13433"/>
    </source>
</evidence>
<evidence type="ECO:0000250" key="2">
    <source>
        <dbReference type="UniProtKB" id="Q8C145"/>
    </source>
</evidence>
<evidence type="ECO:0000255" key="3"/>
<evidence type="ECO:0000256" key="4">
    <source>
        <dbReference type="SAM" id="MobiDB-lite"/>
    </source>
</evidence>
<evidence type="ECO:0000269" key="5">
    <source>
    </source>
</evidence>
<evidence type="ECO:0000305" key="6"/>
<evidence type="ECO:0000312" key="7">
    <source>
        <dbReference type="EMBL" id="AAH97493.1"/>
    </source>
</evidence>
<evidence type="ECO:0000312" key="8">
    <source>
        <dbReference type="RGD" id="1304664"/>
    </source>
</evidence>
<evidence type="ECO:0007744" key="9">
    <source>
    </source>
</evidence>
<reference evidence="7" key="1">
    <citation type="journal article" date="2004" name="Genome Res.">
        <title>The status, quality, and expansion of the NIH full-length cDNA project: the Mammalian Gene Collection (MGC).</title>
        <authorList>
            <consortium name="The MGC Project Team"/>
        </authorList>
    </citation>
    <scope>NUCLEOTIDE SEQUENCE [LARGE SCALE MRNA]</scope>
    <source>
        <tissue evidence="7">Placenta</tissue>
    </source>
</reference>
<reference key="2">
    <citation type="journal article" date="2005" name="J. Nutr.">
        <title>Zinc deficiency is associated with increased brain zinc import and LIV-1 expression and decreased ZnT-1 expression in neonatal rats.</title>
        <authorList>
            <person name="Chowanadisai W."/>
            <person name="Kelleher S.L."/>
            <person name="Loennerdal B."/>
        </authorList>
    </citation>
    <scope>SUBCELLULAR LOCATION</scope>
    <scope>TISSUE SPECIFICITY</scope>
</reference>
<reference key="3">
    <citation type="journal article" date="2012" name="Nat. Commun.">
        <title>Quantitative maps of protein phosphorylation sites across 14 different rat organs and tissues.</title>
        <authorList>
            <person name="Lundby A."/>
            <person name="Secher A."/>
            <person name="Lage K."/>
            <person name="Nordsborg N.B."/>
            <person name="Dmytriyev A."/>
            <person name="Lundby C."/>
            <person name="Olsen J.V."/>
        </authorList>
    </citation>
    <scope>PHOSPHORYLATION [LARGE SCALE ANALYSIS] AT SER-464</scope>
    <scope>IDENTIFICATION BY MASS SPECTROMETRY [LARGE SCALE ANALYSIS]</scope>
</reference>
<protein>
    <recommendedName>
        <fullName evidence="6">Zinc transporter ZIP6</fullName>
    </recommendedName>
    <alternativeName>
        <fullName>Solute carrier family 39 member 6</fullName>
    </alternativeName>
    <alternativeName>
        <fullName>Zrt- and Irt-like protein 6</fullName>
        <shortName>ZIP-6</shortName>
    </alternativeName>
</protein>
<gene>
    <name evidence="7 8" type="primary">Slc39a6</name>
    <name type="synonym">Zip6</name>
</gene>